<evidence type="ECO:0000255" key="1">
    <source>
        <dbReference type="HAMAP-Rule" id="MF_00725"/>
    </source>
</evidence>
<organism>
    <name type="scientific">Escherichia coli (strain 55989 / EAEC)</name>
    <dbReference type="NCBI Taxonomy" id="585055"/>
    <lineage>
        <taxon>Bacteria</taxon>
        <taxon>Pseudomonadati</taxon>
        <taxon>Pseudomonadota</taxon>
        <taxon>Gammaproteobacteria</taxon>
        <taxon>Enterobacterales</taxon>
        <taxon>Enterobacteriaceae</taxon>
        <taxon>Escherichia</taxon>
    </lineage>
</organism>
<comment type="function">
    <text evidence="1">Functions in complex with FlhC as a master transcriptional regulator that regulates transcription of several flagellar and non-flagellar operons by binding to their promoter region. Activates expression of class 2 flagellar genes, including fliA, which is a flagellum-specific sigma factor that turns on the class 3 genes. Also regulates genes whose products function in a variety of physiological pathways.</text>
</comment>
<comment type="subunit">
    <text evidence="1">Homodimer; disulfide-linked. Forms a heterohexamer composed of two FlhC and four FlhD subunits. Each FlhC binds a FlhD dimer, forming a heterotrimer, and a hexamer assembles by dimerization of two heterotrimers.</text>
</comment>
<comment type="subcellular location">
    <subcellularLocation>
        <location evidence="1">Cytoplasm</location>
    </subcellularLocation>
</comment>
<comment type="domain">
    <text evidence="1">The C-terminal region contains a putative helix-turn-helix (HTH) motif, suggesting that this region may bind DNA.</text>
</comment>
<comment type="similarity">
    <text evidence="1">Belongs to the FlhD family.</text>
</comment>
<keyword id="KW-0010">Activator</keyword>
<keyword id="KW-1005">Bacterial flagellum biogenesis</keyword>
<keyword id="KW-0963">Cytoplasm</keyword>
<keyword id="KW-1015">Disulfide bond</keyword>
<keyword id="KW-0238">DNA-binding</keyword>
<keyword id="KW-1185">Reference proteome</keyword>
<keyword id="KW-0804">Transcription</keyword>
<keyword id="KW-0805">Transcription regulation</keyword>
<dbReference type="EMBL" id="CU928145">
    <property type="protein sequence ID" value="CAU97932.1"/>
    <property type="molecule type" value="Genomic_DNA"/>
</dbReference>
<dbReference type="SMR" id="B7L7U5"/>
<dbReference type="KEGG" id="eck:EC55989_2071"/>
<dbReference type="HOGENOM" id="CLU_144160_0_0_6"/>
<dbReference type="Proteomes" id="UP000000746">
    <property type="component" value="Chromosome"/>
</dbReference>
<dbReference type="GO" id="GO:0005737">
    <property type="term" value="C:cytoplasm"/>
    <property type="evidence" value="ECO:0007669"/>
    <property type="project" value="UniProtKB-SubCell"/>
</dbReference>
<dbReference type="GO" id="GO:0003677">
    <property type="term" value="F:DNA binding"/>
    <property type="evidence" value="ECO:0007669"/>
    <property type="project" value="UniProtKB-UniRule"/>
</dbReference>
<dbReference type="GO" id="GO:0044780">
    <property type="term" value="P:bacterial-type flagellum assembly"/>
    <property type="evidence" value="ECO:0007669"/>
    <property type="project" value="InterPro"/>
</dbReference>
<dbReference type="GO" id="GO:0045893">
    <property type="term" value="P:positive regulation of DNA-templated transcription"/>
    <property type="evidence" value="ECO:0007669"/>
    <property type="project" value="InterPro"/>
</dbReference>
<dbReference type="GO" id="GO:1902208">
    <property type="term" value="P:regulation of bacterial-type flagellum assembly"/>
    <property type="evidence" value="ECO:0007669"/>
    <property type="project" value="UniProtKB-UniRule"/>
</dbReference>
<dbReference type="FunFam" id="1.10.4000.10:FF:000001">
    <property type="entry name" value="Flagellar transcriptional regulator FlhD"/>
    <property type="match status" value="1"/>
</dbReference>
<dbReference type="Gene3D" id="1.10.4000.10">
    <property type="entry name" value="Flagellar transcriptional activator FlhD"/>
    <property type="match status" value="1"/>
</dbReference>
<dbReference type="HAMAP" id="MF_00725">
    <property type="entry name" value="FlhD"/>
    <property type="match status" value="1"/>
</dbReference>
<dbReference type="InterPro" id="IPR023559">
    <property type="entry name" value="Flagellar_FlhD"/>
</dbReference>
<dbReference type="InterPro" id="IPR036194">
    <property type="entry name" value="FlhD_sf"/>
</dbReference>
<dbReference type="NCBIfam" id="NF002783">
    <property type="entry name" value="PRK02909.1-1"/>
    <property type="match status" value="1"/>
</dbReference>
<dbReference type="Pfam" id="PF05247">
    <property type="entry name" value="FlhD"/>
    <property type="match status" value="1"/>
</dbReference>
<dbReference type="SUPFAM" id="SSF63592">
    <property type="entry name" value="Flagellar transcriptional activator FlhD"/>
    <property type="match status" value="1"/>
</dbReference>
<name>FLHD_ECO55</name>
<reference key="1">
    <citation type="journal article" date="2009" name="PLoS Genet.">
        <title>Organised genome dynamics in the Escherichia coli species results in highly diverse adaptive paths.</title>
        <authorList>
            <person name="Touchon M."/>
            <person name="Hoede C."/>
            <person name="Tenaillon O."/>
            <person name="Barbe V."/>
            <person name="Baeriswyl S."/>
            <person name="Bidet P."/>
            <person name="Bingen E."/>
            <person name="Bonacorsi S."/>
            <person name="Bouchier C."/>
            <person name="Bouvet O."/>
            <person name="Calteau A."/>
            <person name="Chiapello H."/>
            <person name="Clermont O."/>
            <person name="Cruveiller S."/>
            <person name="Danchin A."/>
            <person name="Diard M."/>
            <person name="Dossat C."/>
            <person name="Karoui M.E."/>
            <person name="Frapy E."/>
            <person name="Garry L."/>
            <person name="Ghigo J.M."/>
            <person name="Gilles A.M."/>
            <person name="Johnson J."/>
            <person name="Le Bouguenec C."/>
            <person name="Lescat M."/>
            <person name="Mangenot S."/>
            <person name="Martinez-Jehanne V."/>
            <person name="Matic I."/>
            <person name="Nassif X."/>
            <person name="Oztas S."/>
            <person name="Petit M.A."/>
            <person name="Pichon C."/>
            <person name="Rouy Z."/>
            <person name="Ruf C.S."/>
            <person name="Schneider D."/>
            <person name="Tourret J."/>
            <person name="Vacherie B."/>
            <person name="Vallenet D."/>
            <person name="Medigue C."/>
            <person name="Rocha E.P.C."/>
            <person name="Denamur E."/>
        </authorList>
    </citation>
    <scope>NUCLEOTIDE SEQUENCE [LARGE SCALE GENOMIC DNA]</scope>
    <source>
        <strain>55989 / EAEC</strain>
    </source>
</reference>
<protein>
    <recommendedName>
        <fullName evidence="1">Flagellar transcriptional regulator FlhD</fullName>
    </recommendedName>
</protein>
<gene>
    <name evidence="1" type="primary">flhD</name>
    <name type="ordered locus">EC55989_2071</name>
</gene>
<proteinExistence type="inferred from homology"/>
<accession>B7L7U5</accession>
<sequence>MGIMHTSELLKHIYDINLSYLLLAQRLIVQDKASAMFRLGINEEMATTLAALTLPQMVKLAETNQLVCHFRFDSHQTITQLTQDSRVDDLQQIHTGIMLSTRLLNDVNQPEEALRKKRA</sequence>
<feature type="chain" id="PRO_1000148056" description="Flagellar transcriptional regulator FlhD">
    <location>
        <begin position="1"/>
        <end position="119"/>
    </location>
</feature>
<feature type="disulfide bond" description="Interchain" evidence="1">
    <location>
        <position position="68"/>
    </location>
</feature>